<accession>Q4FPR6</accession>
<sequence length="124" mass="14485">MYFFIKTINKYLYKLIYSFIVFYQKIISPILPARCRYYPTCSNYGKQALAWYGVWNGSLLLLKRIGRCHPLGGHGIDFVPLPLASYHYQHVSLIMSACMKAQGLYVYRDNNGYVARLNHMMKLT</sequence>
<proteinExistence type="inferred from homology"/>
<keyword id="KW-0997">Cell inner membrane</keyword>
<keyword id="KW-1003">Cell membrane</keyword>
<keyword id="KW-0472">Membrane</keyword>
<keyword id="KW-1185">Reference proteome</keyword>
<gene>
    <name type="ordered locus">Psyc_2145</name>
</gene>
<reference key="1">
    <citation type="journal article" date="2010" name="Appl. Environ. Microbiol.">
        <title>The genome sequence of Psychrobacter arcticus 273-4, a psychroactive Siberian permafrost bacterium, reveals mechanisms for adaptation to low-temperature growth.</title>
        <authorList>
            <person name="Ayala-del-Rio H.L."/>
            <person name="Chain P.S."/>
            <person name="Grzymski J.J."/>
            <person name="Ponder M.A."/>
            <person name="Ivanova N."/>
            <person name="Bergholz P.W."/>
            <person name="Di Bartolo G."/>
            <person name="Hauser L."/>
            <person name="Land M."/>
            <person name="Bakermans C."/>
            <person name="Rodrigues D."/>
            <person name="Klappenbach J."/>
            <person name="Zarka D."/>
            <person name="Larimer F."/>
            <person name="Richardson P."/>
            <person name="Murray A."/>
            <person name="Thomashow M."/>
            <person name="Tiedje J.M."/>
        </authorList>
    </citation>
    <scope>NUCLEOTIDE SEQUENCE [LARGE SCALE GENOMIC DNA]</scope>
    <source>
        <strain>DSM 17307 / VKM B-2377 / 273-4</strain>
    </source>
</reference>
<feature type="chain" id="PRO_0000253147" description="Putative membrane protein insertion efficiency factor">
    <location>
        <begin position="1"/>
        <end position="124"/>
    </location>
</feature>
<dbReference type="EMBL" id="CP000082">
    <property type="protein sequence ID" value="AAZ19992.1"/>
    <property type="molecule type" value="Genomic_DNA"/>
</dbReference>
<dbReference type="RefSeq" id="WP_011281398.1">
    <property type="nucleotide sequence ID" value="NC_007204.1"/>
</dbReference>
<dbReference type="STRING" id="259536.Psyc_2145"/>
<dbReference type="KEGG" id="par:Psyc_2145"/>
<dbReference type="eggNOG" id="COG0759">
    <property type="taxonomic scope" value="Bacteria"/>
</dbReference>
<dbReference type="HOGENOM" id="CLU_144811_4_0_6"/>
<dbReference type="OrthoDB" id="9801753at2"/>
<dbReference type="Proteomes" id="UP000000546">
    <property type="component" value="Chromosome"/>
</dbReference>
<dbReference type="GO" id="GO:0005886">
    <property type="term" value="C:plasma membrane"/>
    <property type="evidence" value="ECO:0007669"/>
    <property type="project" value="UniProtKB-SubCell"/>
</dbReference>
<dbReference type="HAMAP" id="MF_00386">
    <property type="entry name" value="UPF0161_YidD"/>
    <property type="match status" value="1"/>
</dbReference>
<dbReference type="InterPro" id="IPR002696">
    <property type="entry name" value="Membr_insert_effic_factor_YidD"/>
</dbReference>
<dbReference type="NCBIfam" id="TIGR00278">
    <property type="entry name" value="membrane protein insertion efficiency factor YidD"/>
    <property type="match status" value="1"/>
</dbReference>
<dbReference type="PANTHER" id="PTHR33383">
    <property type="entry name" value="MEMBRANE PROTEIN INSERTION EFFICIENCY FACTOR-RELATED"/>
    <property type="match status" value="1"/>
</dbReference>
<dbReference type="PANTHER" id="PTHR33383:SF1">
    <property type="entry name" value="MEMBRANE PROTEIN INSERTION EFFICIENCY FACTOR-RELATED"/>
    <property type="match status" value="1"/>
</dbReference>
<dbReference type="Pfam" id="PF01809">
    <property type="entry name" value="YidD"/>
    <property type="match status" value="1"/>
</dbReference>
<dbReference type="SMART" id="SM01234">
    <property type="entry name" value="Haemolytic"/>
    <property type="match status" value="1"/>
</dbReference>
<name>YIDD_PSYA2</name>
<protein>
    <recommendedName>
        <fullName evidence="1">Putative membrane protein insertion efficiency factor</fullName>
    </recommendedName>
</protein>
<organism>
    <name type="scientific">Psychrobacter arcticus (strain DSM 17307 / VKM B-2377 / 273-4)</name>
    <dbReference type="NCBI Taxonomy" id="259536"/>
    <lineage>
        <taxon>Bacteria</taxon>
        <taxon>Pseudomonadati</taxon>
        <taxon>Pseudomonadota</taxon>
        <taxon>Gammaproteobacteria</taxon>
        <taxon>Moraxellales</taxon>
        <taxon>Moraxellaceae</taxon>
        <taxon>Psychrobacter</taxon>
    </lineage>
</organism>
<comment type="function">
    <text evidence="1">Could be involved in insertion of integral membrane proteins into the membrane.</text>
</comment>
<comment type="subcellular location">
    <subcellularLocation>
        <location evidence="1">Cell inner membrane</location>
        <topology evidence="1">Peripheral membrane protein</topology>
        <orientation evidence="1">Cytoplasmic side</orientation>
    </subcellularLocation>
</comment>
<comment type="similarity">
    <text evidence="1">Belongs to the UPF0161 family.</text>
</comment>
<evidence type="ECO:0000255" key="1">
    <source>
        <dbReference type="HAMAP-Rule" id="MF_00386"/>
    </source>
</evidence>